<name>HCAT_ECOLI</name>
<gene>
    <name type="primary">hcaT</name>
    <name type="synonym">yfhS</name>
    <name type="ordered locus">b2536</name>
    <name type="ordered locus">JW2520</name>
</gene>
<reference key="1">
    <citation type="submission" date="1994-09" db="EMBL/GenBank/DDBJ databases">
        <authorList>
            <person name="Turlin E."/>
            <person name="Gasser F."/>
            <person name="Biville F."/>
        </authorList>
    </citation>
    <scope>NUCLEOTIDE SEQUENCE [GENOMIC DNA]</scope>
    <source>
        <strain>K12</strain>
    </source>
</reference>
<reference key="2">
    <citation type="journal article" date="1998" name="J. Bacteriol.">
        <title>Characterization of the hca cluster encoding the dioxygenolytic pathway for initial catabolism of 3-phenylpropionic acid in Escherichia coli K-12.</title>
        <authorList>
            <person name="Diaz E."/>
            <person name="Ferrandez A."/>
            <person name="Garcia J.L."/>
        </authorList>
    </citation>
    <scope>NUCLEOTIDE SEQUENCE [GENOMIC DNA]</scope>
    <scope>CHARACTERIZATION</scope>
    <source>
        <strain>K12 / MC1061 / ATCC 53338 / DSM 7140</strain>
    </source>
</reference>
<reference key="3">
    <citation type="journal article" date="1997" name="DNA Res.">
        <title>Construction of a contiguous 874-kb sequence of the Escherichia coli-K12 genome corresponding to 50.0-68.8 min on the linkage map and analysis of its sequence features.</title>
        <authorList>
            <person name="Yamamoto Y."/>
            <person name="Aiba H."/>
            <person name="Baba T."/>
            <person name="Hayashi K."/>
            <person name="Inada T."/>
            <person name="Isono K."/>
            <person name="Itoh T."/>
            <person name="Kimura S."/>
            <person name="Kitagawa M."/>
            <person name="Makino K."/>
            <person name="Miki T."/>
            <person name="Mitsuhashi N."/>
            <person name="Mizobuchi K."/>
            <person name="Mori H."/>
            <person name="Nakade S."/>
            <person name="Nakamura Y."/>
            <person name="Nashimoto H."/>
            <person name="Oshima T."/>
            <person name="Oyama S."/>
            <person name="Saito N."/>
            <person name="Sampei G."/>
            <person name="Satoh Y."/>
            <person name="Sivasundaram S."/>
            <person name="Tagami H."/>
            <person name="Takahashi H."/>
            <person name="Takeda J."/>
            <person name="Takemoto K."/>
            <person name="Uehara K."/>
            <person name="Wada C."/>
            <person name="Yamagata S."/>
            <person name="Horiuchi T."/>
        </authorList>
    </citation>
    <scope>NUCLEOTIDE SEQUENCE [LARGE SCALE GENOMIC DNA]</scope>
    <source>
        <strain>K12 / W3110 / ATCC 27325 / DSM 5911</strain>
    </source>
</reference>
<reference key="4">
    <citation type="journal article" date="1997" name="Science">
        <title>The complete genome sequence of Escherichia coli K-12.</title>
        <authorList>
            <person name="Blattner F.R."/>
            <person name="Plunkett G. III"/>
            <person name="Bloch C.A."/>
            <person name="Perna N.T."/>
            <person name="Burland V."/>
            <person name="Riley M."/>
            <person name="Collado-Vides J."/>
            <person name="Glasner J.D."/>
            <person name="Rode C.K."/>
            <person name="Mayhew G.F."/>
            <person name="Gregor J."/>
            <person name="Davis N.W."/>
            <person name="Kirkpatrick H.A."/>
            <person name="Goeden M.A."/>
            <person name="Rose D.J."/>
            <person name="Mau B."/>
            <person name="Shao Y."/>
        </authorList>
    </citation>
    <scope>NUCLEOTIDE SEQUENCE [LARGE SCALE GENOMIC DNA]</scope>
    <source>
        <strain>K12 / MG1655 / ATCC 47076</strain>
    </source>
</reference>
<reference key="5">
    <citation type="journal article" date="2006" name="Mol. Syst. Biol.">
        <title>Highly accurate genome sequences of Escherichia coli K-12 strains MG1655 and W3110.</title>
        <authorList>
            <person name="Hayashi K."/>
            <person name="Morooka N."/>
            <person name="Yamamoto Y."/>
            <person name="Fujita K."/>
            <person name="Isono K."/>
            <person name="Choi S."/>
            <person name="Ohtsubo E."/>
            <person name="Baba T."/>
            <person name="Wanner B.L."/>
            <person name="Mori H."/>
            <person name="Horiuchi T."/>
        </authorList>
    </citation>
    <scope>NUCLEOTIDE SEQUENCE [LARGE SCALE GENOMIC DNA]</scope>
    <source>
        <strain>K12 / W3110 / ATCC 27325 / DSM 5911</strain>
    </source>
</reference>
<evidence type="ECO:0000250" key="1"/>
<evidence type="ECO:0000305" key="2"/>
<organism>
    <name type="scientific">Escherichia coli (strain K12)</name>
    <dbReference type="NCBI Taxonomy" id="83333"/>
    <lineage>
        <taxon>Bacteria</taxon>
        <taxon>Pseudomonadati</taxon>
        <taxon>Pseudomonadota</taxon>
        <taxon>Gammaproteobacteria</taxon>
        <taxon>Enterobacterales</taxon>
        <taxon>Enterobacteriaceae</taxon>
        <taxon>Escherichia</taxon>
    </lineage>
</organism>
<feature type="chain" id="PRO_0000196189" description="Probable 3-phenylpropionic acid transporter">
    <location>
        <begin position="1"/>
        <end position="379"/>
    </location>
</feature>
<feature type="topological domain" description="Cytoplasmic" evidence="1">
    <location>
        <begin position="1"/>
        <end position="4"/>
    </location>
</feature>
<feature type="transmembrane region" description="Helical; Name=1" evidence="1">
    <location>
        <begin position="5"/>
        <end position="31"/>
    </location>
</feature>
<feature type="topological domain" description="Periplasmic" evidence="1">
    <location>
        <begin position="32"/>
        <end position="37"/>
    </location>
</feature>
<feature type="transmembrane region" description="Helical; Name=2" evidence="1">
    <location>
        <begin position="38"/>
        <end position="66"/>
    </location>
</feature>
<feature type="topological domain" description="Cytoplasmic" evidence="1">
    <location>
        <begin position="67"/>
        <end position="70"/>
    </location>
</feature>
<feature type="transmembrane region" description="Helical; Name=3" evidence="1">
    <location>
        <begin position="71"/>
        <end position="96"/>
    </location>
</feature>
<feature type="topological domain" description="Periplasmic" evidence="1">
    <location>
        <begin position="97"/>
        <end position="100"/>
    </location>
</feature>
<feature type="transmembrane region" description="Helical; Name=4" evidence="1">
    <location>
        <begin position="101"/>
        <end position="118"/>
    </location>
</feature>
<feature type="topological domain" description="Cytoplasmic" evidence="1">
    <location>
        <begin position="119"/>
        <end position="129"/>
    </location>
</feature>
<feature type="transmembrane region" description="Helical; Name=5" evidence="1">
    <location>
        <begin position="130"/>
        <end position="152"/>
    </location>
</feature>
<feature type="topological domain" description="Periplasmic" evidence="1">
    <location>
        <begin position="153"/>
        <end position="155"/>
    </location>
</feature>
<feature type="transmembrane region" description="Helical; Name=6" evidence="1">
    <location>
        <begin position="156"/>
        <end position="175"/>
    </location>
</feature>
<feature type="topological domain" description="Cytoplasmic" evidence="1">
    <location>
        <begin position="176"/>
        <end position="207"/>
    </location>
</feature>
<feature type="transmembrane region" description="Helical; Name=7" evidence="1">
    <location>
        <begin position="208"/>
        <end position="227"/>
    </location>
</feature>
<feature type="topological domain" description="Periplasmic" evidence="1">
    <location>
        <begin position="228"/>
        <end position="231"/>
    </location>
</feature>
<feature type="transmembrane region" description="Helical; Name=8" evidence="1">
    <location>
        <begin position="232"/>
        <end position="256"/>
    </location>
</feature>
<feature type="topological domain" description="Cytoplasmic" evidence="1">
    <location>
        <begin position="257"/>
        <end position="266"/>
    </location>
</feature>
<feature type="transmembrane region" description="Helical; Name=9" evidence="1">
    <location>
        <begin position="267"/>
        <end position="286"/>
    </location>
</feature>
<feature type="topological domain" description="Periplasmic" evidence="1">
    <location>
        <begin position="287"/>
        <end position="289"/>
    </location>
</feature>
<feature type="transmembrane region" description="Helical; Name=10" evidence="1">
    <location>
        <begin position="290"/>
        <end position="312"/>
    </location>
</feature>
<feature type="topological domain" description="Cytoplasmic" evidence="1">
    <location>
        <begin position="313"/>
        <end position="323"/>
    </location>
</feature>
<feature type="transmembrane region" description="Helical; Name=11" evidence="1">
    <location>
        <begin position="324"/>
        <end position="351"/>
    </location>
</feature>
<feature type="topological domain" description="Periplasmic" evidence="1">
    <location>
        <begin position="352"/>
        <end position="354"/>
    </location>
</feature>
<feature type="transmembrane region" description="Helical; Name=12" evidence="1">
    <location>
        <begin position="355"/>
        <end position="375"/>
    </location>
</feature>
<feature type="topological domain" description="Cytoplasmic" evidence="1">
    <location>
        <begin position="376"/>
        <end position="379"/>
    </location>
</feature>
<feature type="sequence conflict" description="In Ref. 2; CAA71954." evidence="2" ref="2">
    <original>S</original>
    <variation>N</variation>
    <location>
        <position position="191"/>
    </location>
</feature>
<keyword id="KW-0997">Cell inner membrane</keyword>
<keyword id="KW-1003">Cell membrane</keyword>
<keyword id="KW-0472">Membrane</keyword>
<keyword id="KW-1185">Reference proteome</keyword>
<keyword id="KW-0769">Symport</keyword>
<keyword id="KW-0812">Transmembrane</keyword>
<keyword id="KW-1133">Transmembrane helix</keyword>
<keyword id="KW-0813">Transport</keyword>
<accession>Q47142</accession>
<accession>O05660</accession>
<accession>P77638</accession>
<comment type="function">
    <text>Probable permease involved in the uptake of 3-phenylpropionic acid.</text>
</comment>
<comment type="subcellular location">
    <subcellularLocation>
        <location evidence="2">Cell inner membrane</location>
        <topology evidence="2">Multi-pass membrane protein</topology>
    </subcellularLocation>
</comment>
<comment type="similarity">
    <text evidence="2">Belongs to the major facilitator superfamily. Phenyl propionate permease (PPP) (TC 2.A.1.27) family.</text>
</comment>
<comment type="sequence caution" evidence="2">
    <conflict type="frameshift">
        <sequence resource="EMBL-CDS" id="CAA86021"/>
    </conflict>
</comment>
<proteinExistence type="evidence at protein level"/>
<protein>
    <recommendedName>
        <fullName>Probable 3-phenylpropionic acid transporter</fullName>
    </recommendedName>
</protein>
<sequence length="379" mass="41593">MVLQSTRWLALGYFTYFFSYGIFLPFWSVWLKGIGLTPETIGLLLGAGLVARFLGSLLIAPRVSDPSRLISALRVLALLTLLFAVAFWAGAHVAWLMLVMIGFNLFFSPLVPLTDALANTWQKQFPLDYGKVRLWGSVAFVIGSALTGKLVTMFDYRVILALLTLGVASMLLGFLIRPTIQPQGASRQQESTGWSAWLALVRQNWRFLACVCLLQGAHAAYYGFSAIYWQAAGYSASAVGYLWSLGVVAEVIIFALSNKLFRRCSARDMLLISAICGVVRWGIMGATTALPWLIVVQILHCGTFTVCHLAAMRYIAARQGSEVIRLQAVYSAVAMGGSIAIMTVFAGFLYQYLGHGVFWVMALVALPAMFLRPKVVPSC</sequence>
<dbReference type="EMBL" id="Z37966">
    <property type="protein sequence ID" value="CAA86021.1"/>
    <property type="status" value="ALT_FRAME"/>
    <property type="molecule type" value="Genomic_DNA"/>
</dbReference>
<dbReference type="EMBL" id="Y11071">
    <property type="protein sequence ID" value="CAA71954.1"/>
    <property type="molecule type" value="Genomic_DNA"/>
</dbReference>
<dbReference type="EMBL" id="U00096">
    <property type="protein sequence ID" value="AAC75589.1"/>
    <property type="molecule type" value="Genomic_DNA"/>
</dbReference>
<dbReference type="EMBL" id="AP009048">
    <property type="protein sequence ID" value="BAA16431.1"/>
    <property type="molecule type" value="Genomic_DNA"/>
</dbReference>
<dbReference type="PIR" id="G65030">
    <property type="entry name" value="G65030"/>
</dbReference>
<dbReference type="PIR" id="S49295">
    <property type="entry name" value="S49295"/>
</dbReference>
<dbReference type="RefSeq" id="NP_417031.1">
    <property type="nucleotide sequence ID" value="NC_000913.3"/>
</dbReference>
<dbReference type="RefSeq" id="WP_000244193.1">
    <property type="nucleotide sequence ID" value="NZ_LN832404.1"/>
</dbReference>
<dbReference type="SMR" id="Q47142"/>
<dbReference type="BioGRID" id="4261387">
    <property type="interactions" value="11"/>
</dbReference>
<dbReference type="FunCoup" id="Q47142">
    <property type="interactions" value="11"/>
</dbReference>
<dbReference type="STRING" id="511145.b2536"/>
<dbReference type="TCDB" id="2.A.1.27.1">
    <property type="family name" value="the major facilitator superfamily (mfs)"/>
</dbReference>
<dbReference type="PaxDb" id="511145-b2536"/>
<dbReference type="EnsemblBacteria" id="AAC75589">
    <property type="protein sequence ID" value="AAC75589"/>
    <property type="gene ID" value="b2536"/>
</dbReference>
<dbReference type="GeneID" id="947007"/>
<dbReference type="KEGG" id="ecj:JW2520"/>
<dbReference type="KEGG" id="eco:b2536"/>
<dbReference type="KEGG" id="ecoc:C3026_14050"/>
<dbReference type="PATRIC" id="fig|1411691.4.peg.4198"/>
<dbReference type="EchoBASE" id="EB3227"/>
<dbReference type="eggNOG" id="COG2814">
    <property type="taxonomic scope" value="Bacteria"/>
</dbReference>
<dbReference type="HOGENOM" id="CLU_013133_6_0_6"/>
<dbReference type="InParanoid" id="Q47142"/>
<dbReference type="OMA" id="AQILHCG"/>
<dbReference type="OrthoDB" id="9150135at2"/>
<dbReference type="PhylomeDB" id="Q47142"/>
<dbReference type="BioCyc" id="EcoCyc:HCAT-MONOMER"/>
<dbReference type="PRO" id="PR:Q47142"/>
<dbReference type="Proteomes" id="UP000000625">
    <property type="component" value="Chromosome"/>
</dbReference>
<dbReference type="GO" id="GO:0005886">
    <property type="term" value="C:plasma membrane"/>
    <property type="evidence" value="ECO:0000314"/>
    <property type="project" value="EcoCyc"/>
</dbReference>
<dbReference type="GO" id="GO:0030395">
    <property type="term" value="F:lactose binding"/>
    <property type="evidence" value="ECO:0000318"/>
    <property type="project" value="GO_Central"/>
</dbReference>
<dbReference type="GO" id="GO:0015528">
    <property type="term" value="F:lactose:proton symporter activity"/>
    <property type="evidence" value="ECO:0000318"/>
    <property type="project" value="GO_Central"/>
</dbReference>
<dbReference type="CDD" id="cd17335">
    <property type="entry name" value="MFS_MFSD6"/>
    <property type="match status" value="1"/>
</dbReference>
<dbReference type="FunFam" id="1.20.1250.20:FF:000046">
    <property type="entry name" value="3-phenylpropionic acid MFS transporter"/>
    <property type="match status" value="1"/>
</dbReference>
<dbReference type="FunFam" id="1.20.1250.20:FF:000047">
    <property type="entry name" value="3-phenylpropionic acid MFS transporter"/>
    <property type="match status" value="1"/>
</dbReference>
<dbReference type="Gene3D" id="1.20.1250.20">
    <property type="entry name" value="MFS general substrate transporter like domains"/>
    <property type="match status" value="2"/>
</dbReference>
<dbReference type="InterPro" id="IPR047592">
    <property type="entry name" value="HcaT"/>
</dbReference>
<dbReference type="InterPro" id="IPR026032">
    <property type="entry name" value="HcaT-like"/>
</dbReference>
<dbReference type="InterPro" id="IPR024989">
    <property type="entry name" value="MFS_assoc_dom"/>
</dbReference>
<dbReference type="InterPro" id="IPR036259">
    <property type="entry name" value="MFS_trans_sf"/>
</dbReference>
<dbReference type="NCBIfam" id="TIGR00902">
    <property type="entry name" value="2A0127"/>
    <property type="match status" value="1"/>
</dbReference>
<dbReference type="NCBIfam" id="NF037955">
    <property type="entry name" value="mfs"/>
    <property type="match status" value="1"/>
</dbReference>
<dbReference type="NCBIfam" id="NF008346">
    <property type="entry name" value="PRK11128.1"/>
    <property type="match status" value="1"/>
</dbReference>
<dbReference type="PANTHER" id="PTHR23522:SF10">
    <property type="entry name" value="3-PHENYLPROPIONIC ACID TRANSPORTER-RELATED"/>
    <property type="match status" value="1"/>
</dbReference>
<dbReference type="PANTHER" id="PTHR23522">
    <property type="entry name" value="BLL5896 PROTEIN"/>
    <property type="match status" value="1"/>
</dbReference>
<dbReference type="Pfam" id="PF12832">
    <property type="entry name" value="MFS_1_like"/>
    <property type="match status" value="1"/>
</dbReference>
<dbReference type="PIRSF" id="PIRSF004925">
    <property type="entry name" value="HcaT"/>
    <property type="match status" value="1"/>
</dbReference>
<dbReference type="SUPFAM" id="SSF103473">
    <property type="entry name" value="MFS general substrate transporter"/>
    <property type="match status" value="1"/>
</dbReference>